<protein>
    <recommendedName>
        <fullName>RuvB-like helicase 1</fullName>
        <ecNumber>3.6.4.12</ecNumber>
    </recommendedName>
</protein>
<sequence>MATANTSSGSMNGVGPVTMDSSTSGASREARIATHSHIKGLGLSDDGTALPSAQGFVGQKAAREACGLVLDLIRMKKFAGKALLLAGGPGTGKTALALAVSQELGHKVPFCPMVGSEVYSSEVKKTEVLMENFRRAIGLRVRETKEVYEGEITELTPTEAENPLSGYGKTIAHVVIALKTVKGTKQLRLDPSIYESIMKERISVGDVIYIEANTGAVKRVGRSDAYATEFDLEAEEYVPLPKGEVHKRKEVVQDVTLHDLDMANAKPQGGQDIMSVVGQLVKGRRTEVTDKLRGEINRVVDKYIEQGIAELVPGVLFIDEVHMLDMECFTYLNRALESTISPHVILATNRGQCMVRGTEYEGPASGTGIVAPHGIPLDLLDRCMIVRTMPYEKDEIREVLRLRAKVEGHLIAEDALEKLTEEGVSSSLRFALQLLSPSSILAKTAGRSEITIKDIVEANELFIDARRSAKVLMSIGEATTEAVPMETS</sequence>
<name>RUVB1_MYCMD</name>
<comment type="function">
    <text evidence="1">DNA helicase which participates in several chromatin remodeling complexes, including the SWR1 and the INO80 complexes. The SWR1 complex mediates the ATP-dependent exchange of histone H2A for the H2A variant HZT1 leading to transcriptional regulation of selected genes by chromatin remodeling. The INO80 complex remodels chromatin by shifting nucleosomes and is involved in DNA repair. Also involved in pre-rRNA processing (By similarity).</text>
</comment>
<comment type="catalytic activity">
    <reaction>
        <text>ATP + H2O = ADP + phosphate + H(+)</text>
        <dbReference type="Rhea" id="RHEA:13065"/>
        <dbReference type="ChEBI" id="CHEBI:15377"/>
        <dbReference type="ChEBI" id="CHEBI:15378"/>
        <dbReference type="ChEBI" id="CHEBI:30616"/>
        <dbReference type="ChEBI" id="CHEBI:43474"/>
        <dbReference type="ChEBI" id="CHEBI:456216"/>
        <dbReference type="EC" id="3.6.4.12"/>
    </reaction>
</comment>
<comment type="subunit">
    <text evidence="1">May form heterododecamers with RVB2. Component of the SWR1 chromatin remodeling complex, the INO80 chromatin remodeling complex, and of the R2TP complex (By similarity).</text>
</comment>
<comment type="subcellular location">
    <subcellularLocation>
        <location evidence="1">Nucleus</location>
    </subcellularLocation>
</comment>
<comment type="similarity">
    <text evidence="3">Belongs to the RuvB family.</text>
</comment>
<keyword id="KW-0010">Activator</keyword>
<keyword id="KW-0067">ATP-binding</keyword>
<keyword id="KW-0156">Chromatin regulator</keyword>
<keyword id="KW-0227">DNA damage</keyword>
<keyword id="KW-0234">DNA repair</keyword>
<keyword id="KW-0347">Helicase</keyword>
<keyword id="KW-0378">Hydrolase</keyword>
<keyword id="KW-0547">Nucleotide-binding</keyword>
<keyword id="KW-0539">Nucleus</keyword>
<keyword id="KW-1185">Reference proteome</keyword>
<keyword id="KW-0804">Transcription</keyword>
<keyword id="KW-0805">Transcription regulation</keyword>
<proteinExistence type="inferred from homology"/>
<organism>
    <name type="scientific">Mycosarcoma maydis</name>
    <name type="common">Corn smut fungus</name>
    <name type="synonym">Ustilago maydis</name>
    <dbReference type="NCBI Taxonomy" id="5270"/>
    <lineage>
        <taxon>Eukaryota</taxon>
        <taxon>Fungi</taxon>
        <taxon>Dikarya</taxon>
        <taxon>Basidiomycota</taxon>
        <taxon>Ustilaginomycotina</taxon>
        <taxon>Ustilaginomycetes</taxon>
        <taxon>Ustilaginales</taxon>
        <taxon>Ustilaginaceae</taxon>
        <taxon>Mycosarcoma</taxon>
    </lineage>
</organism>
<feature type="chain" id="PRO_0000165659" description="RuvB-like helicase 1">
    <location>
        <begin position="1"/>
        <end position="488"/>
    </location>
</feature>
<feature type="region of interest" description="Disordered" evidence="2">
    <location>
        <begin position="1"/>
        <end position="29"/>
    </location>
</feature>
<feature type="compositionally biased region" description="Polar residues" evidence="2">
    <location>
        <begin position="1"/>
        <end position="11"/>
    </location>
</feature>
<feature type="binding site" evidence="1">
    <location>
        <begin position="87"/>
        <end position="94"/>
    </location>
    <ligand>
        <name>ATP</name>
        <dbReference type="ChEBI" id="CHEBI:30616"/>
    </ligand>
</feature>
<accession>Q4P112</accession>
<accession>A0A0D1DMR7</accession>
<evidence type="ECO:0000250" key="1"/>
<evidence type="ECO:0000256" key="2">
    <source>
        <dbReference type="SAM" id="MobiDB-lite"/>
    </source>
</evidence>
<evidence type="ECO:0000305" key="3"/>
<reference key="1">
    <citation type="journal article" date="2006" name="Nature">
        <title>Insights from the genome of the biotrophic fungal plant pathogen Ustilago maydis.</title>
        <authorList>
            <person name="Kaemper J."/>
            <person name="Kahmann R."/>
            <person name="Boelker M."/>
            <person name="Ma L.-J."/>
            <person name="Brefort T."/>
            <person name="Saville B.J."/>
            <person name="Banuett F."/>
            <person name="Kronstad J.W."/>
            <person name="Gold S.E."/>
            <person name="Mueller O."/>
            <person name="Perlin M.H."/>
            <person name="Woesten H.A.B."/>
            <person name="de Vries R."/>
            <person name="Ruiz-Herrera J."/>
            <person name="Reynaga-Pena C.G."/>
            <person name="Snetselaar K."/>
            <person name="McCann M."/>
            <person name="Perez-Martin J."/>
            <person name="Feldbruegge M."/>
            <person name="Basse C.W."/>
            <person name="Steinberg G."/>
            <person name="Ibeas J.I."/>
            <person name="Holloman W."/>
            <person name="Guzman P."/>
            <person name="Farman M.L."/>
            <person name="Stajich J.E."/>
            <person name="Sentandreu R."/>
            <person name="Gonzalez-Prieto J.M."/>
            <person name="Kennell J.C."/>
            <person name="Molina L."/>
            <person name="Schirawski J."/>
            <person name="Mendoza-Mendoza A."/>
            <person name="Greilinger D."/>
            <person name="Muench K."/>
            <person name="Roessel N."/>
            <person name="Scherer M."/>
            <person name="Vranes M."/>
            <person name="Ladendorf O."/>
            <person name="Vincon V."/>
            <person name="Fuchs U."/>
            <person name="Sandrock B."/>
            <person name="Meng S."/>
            <person name="Ho E.C.H."/>
            <person name="Cahill M.J."/>
            <person name="Boyce K.J."/>
            <person name="Klose J."/>
            <person name="Klosterman S.J."/>
            <person name="Deelstra H.J."/>
            <person name="Ortiz-Castellanos L."/>
            <person name="Li W."/>
            <person name="Sanchez-Alonso P."/>
            <person name="Schreier P.H."/>
            <person name="Haeuser-Hahn I."/>
            <person name="Vaupel M."/>
            <person name="Koopmann E."/>
            <person name="Friedrich G."/>
            <person name="Voss H."/>
            <person name="Schlueter T."/>
            <person name="Margolis J."/>
            <person name="Platt D."/>
            <person name="Swimmer C."/>
            <person name="Gnirke A."/>
            <person name="Chen F."/>
            <person name="Vysotskaia V."/>
            <person name="Mannhaupt G."/>
            <person name="Gueldener U."/>
            <person name="Muensterkoetter M."/>
            <person name="Haase D."/>
            <person name="Oesterheld M."/>
            <person name="Mewes H.-W."/>
            <person name="Mauceli E.W."/>
            <person name="DeCaprio D."/>
            <person name="Wade C.M."/>
            <person name="Butler J."/>
            <person name="Young S.K."/>
            <person name="Jaffe D.B."/>
            <person name="Calvo S.E."/>
            <person name="Nusbaum C."/>
            <person name="Galagan J.E."/>
            <person name="Birren B.W."/>
        </authorList>
    </citation>
    <scope>NUCLEOTIDE SEQUENCE [LARGE SCALE GENOMIC DNA]</scope>
    <source>
        <strain>DSM 14603 / FGSC 9021 / UM521</strain>
    </source>
</reference>
<reference key="2">
    <citation type="submission" date="2014-09" db="EMBL/GenBank/DDBJ databases">
        <authorList>
            <person name="Gueldener U."/>
            <person name="Muensterkoetter M."/>
            <person name="Walter M.C."/>
            <person name="Mannhaupt G."/>
            <person name="Kahmann R."/>
        </authorList>
    </citation>
    <scope>GENOME REANNOTATION</scope>
    <source>
        <strain>DSM 14603 / FGSC 9021 / UM521</strain>
    </source>
</reference>
<gene>
    <name type="primary">RVB1</name>
    <name type="ORF">UMAG_06201</name>
</gene>
<dbReference type="EC" id="3.6.4.12"/>
<dbReference type="EMBL" id="CM003161">
    <property type="protein sequence ID" value="KIS65824.1"/>
    <property type="molecule type" value="Genomic_DNA"/>
</dbReference>
<dbReference type="RefSeq" id="XP_011392567.1">
    <property type="nucleotide sequence ID" value="XM_011394265.1"/>
</dbReference>
<dbReference type="SMR" id="Q4P112"/>
<dbReference type="FunCoup" id="Q4P112">
    <property type="interactions" value="642"/>
</dbReference>
<dbReference type="STRING" id="237631.Q4P112"/>
<dbReference type="EnsemblFungi" id="KIS65824">
    <property type="protein sequence ID" value="KIS65824"/>
    <property type="gene ID" value="UMAG_06201"/>
</dbReference>
<dbReference type="GeneID" id="23565873"/>
<dbReference type="KEGG" id="uma:UMAG_06201"/>
<dbReference type="VEuPathDB" id="FungiDB:UMAG_06201"/>
<dbReference type="eggNOG" id="KOG1942">
    <property type="taxonomic scope" value="Eukaryota"/>
</dbReference>
<dbReference type="HOGENOM" id="CLU_028311_1_1_1"/>
<dbReference type="InParanoid" id="Q4P112"/>
<dbReference type="OMA" id="RTLPYNK"/>
<dbReference type="OrthoDB" id="10060499at2759"/>
<dbReference type="Proteomes" id="UP000000561">
    <property type="component" value="Chromosome 22"/>
</dbReference>
<dbReference type="GO" id="GO:0031011">
    <property type="term" value="C:Ino80 complex"/>
    <property type="evidence" value="ECO:0000318"/>
    <property type="project" value="GO_Central"/>
</dbReference>
<dbReference type="GO" id="GO:0035267">
    <property type="term" value="C:NuA4 histone acetyltransferase complex"/>
    <property type="evidence" value="ECO:0000318"/>
    <property type="project" value="GO_Central"/>
</dbReference>
<dbReference type="GO" id="GO:0097255">
    <property type="term" value="C:R2TP complex"/>
    <property type="evidence" value="ECO:0000318"/>
    <property type="project" value="GO_Central"/>
</dbReference>
<dbReference type="GO" id="GO:0000812">
    <property type="term" value="C:Swr1 complex"/>
    <property type="evidence" value="ECO:0000318"/>
    <property type="project" value="GO_Central"/>
</dbReference>
<dbReference type="GO" id="GO:0043138">
    <property type="term" value="F:3'-5' DNA helicase activity"/>
    <property type="evidence" value="ECO:0007669"/>
    <property type="project" value="EnsemblFungi"/>
</dbReference>
<dbReference type="GO" id="GO:0043139">
    <property type="term" value="F:5'-3' DNA helicase activity"/>
    <property type="evidence" value="ECO:0007669"/>
    <property type="project" value="EnsemblFungi"/>
</dbReference>
<dbReference type="GO" id="GO:0005524">
    <property type="term" value="F:ATP binding"/>
    <property type="evidence" value="ECO:0007669"/>
    <property type="project" value="UniProtKB-KW"/>
</dbReference>
<dbReference type="GO" id="GO:0016887">
    <property type="term" value="F:ATP hydrolysis activity"/>
    <property type="evidence" value="ECO:0007669"/>
    <property type="project" value="InterPro"/>
</dbReference>
<dbReference type="GO" id="GO:0003678">
    <property type="term" value="F:DNA helicase activity"/>
    <property type="evidence" value="ECO:0000318"/>
    <property type="project" value="GO_Central"/>
</dbReference>
<dbReference type="GO" id="GO:0000492">
    <property type="term" value="P:box C/D snoRNP assembly"/>
    <property type="evidence" value="ECO:0000318"/>
    <property type="project" value="GO_Central"/>
</dbReference>
<dbReference type="GO" id="GO:0006338">
    <property type="term" value="P:chromatin remodeling"/>
    <property type="evidence" value="ECO:0000318"/>
    <property type="project" value="GO_Central"/>
</dbReference>
<dbReference type="GO" id="GO:0006281">
    <property type="term" value="P:DNA repair"/>
    <property type="evidence" value="ECO:0007669"/>
    <property type="project" value="UniProtKB-KW"/>
</dbReference>
<dbReference type="GO" id="GO:0006357">
    <property type="term" value="P:regulation of transcription by RNA polymerase II"/>
    <property type="evidence" value="ECO:0000318"/>
    <property type="project" value="GO_Central"/>
</dbReference>
<dbReference type="CDD" id="cd00009">
    <property type="entry name" value="AAA"/>
    <property type="match status" value="1"/>
</dbReference>
<dbReference type="FunFam" id="1.10.8.60:FF:000010">
    <property type="entry name" value="RuvB-like helicase"/>
    <property type="match status" value="1"/>
</dbReference>
<dbReference type="FunFam" id="2.40.50.360:FF:000001">
    <property type="entry name" value="RuvB-like helicase"/>
    <property type="match status" value="1"/>
</dbReference>
<dbReference type="FunFam" id="3.40.50.300:FF:001455">
    <property type="entry name" value="RuvB-like helicase"/>
    <property type="match status" value="1"/>
</dbReference>
<dbReference type="FunFam" id="3.40.50.300:FF:002334">
    <property type="entry name" value="RuvB-like helicase"/>
    <property type="match status" value="1"/>
</dbReference>
<dbReference type="Gene3D" id="1.10.8.60">
    <property type="match status" value="1"/>
</dbReference>
<dbReference type="Gene3D" id="3.40.50.300">
    <property type="entry name" value="P-loop containing nucleotide triphosphate hydrolases"/>
    <property type="match status" value="1"/>
</dbReference>
<dbReference type="Gene3D" id="2.40.50.360">
    <property type="entry name" value="RuvB-like helicase, domain II"/>
    <property type="match status" value="1"/>
</dbReference>
<dbReference type="InterPro" id="IPR003593">
    <property type="entry name" value="AAA+_ATPase"/>
</dbReference>
<dbReference type="InterPro" id="IPR027417">
    <property type="entry name" value="P-loop_NTPase"/>
</dbReference>
<dbReference type="InterPro" id="IPR027238">
    <property type="entry name" value="RuvB-like"/>
</dbReference>
<dbReference type="InterPro" id="IPR041048">
    <property type="entry name" value="RuvB-like_C"/>
</dbReference>
<dbReference type="InterPro" id="IPR042487">
    <property type="entry name" value="RuvBL1/2_DNA/RNA_bd_dom"/>
</dbReference>
<dbReference type="InterPro" id="IPR010339">
    <property type="entry name" value="TIP49_P-loop"/>
</dbReference>
<dbReference type="PANTHER" id="PTHR11093">
    <property type="entry name" value="RUVB-RELATED REPTIN AND PONTIN"/>
    <property type="match status" value="1"/>
</dbReference>
<dbReference type="Pfam" id="PF06068">
    <property type="entry name" value="TIP49"/>
    <property type="match status" value="1"/>
</dbReference>
<dbReference type="Pfam" id="PF17856">
    <property type="entry name" value="TIP49_C"/>
    <property type="match status" value="1"/>
</dbReference>
<dbReference type="SMART" id="SM00382">
    <property type="entry name" value="AAA"/>
    <property type="match status" value="1"/>
</dbReference>
<dbReference type="SUPFAM" id="SSF52540">
    <property type="entry name" value="P-loop containing nucleoside triphosphate hydrolases"/>
    <property type="match status" value="1"/>
</dbReference>